<accession>Q75BD8</accession>
<gene>
    <name type="primary">DIB1</name>
    <name type="ordered locus">ADL374W</name>
</gene>
<keyword id="KW-0131">Cell cycle</keyword>
<keyword id="KW-0132">Cell division</keyword>
<keyword id="KW-0498">Mitosis</keyword>
<keyword id="KW-0507">mRNA processing</keyword>
<keyword id="KW-0508">mRNA splicing</keyword>
<keyword id="KW-0539">Nucleus</keyword>
<keyword id="KW-1185">Reference proteome</keyword>
<dbReference type="EMBL" id="AE016817">
    <property type="protein sequence ID" value="AAS51546.1"/>
    <property type="molecule type" value="Genomic_DNA"/>
</dbReference>
<dbReference type="RefSeq" id="NP_983722.1">
    <property type="nucleotide sequence ID" value="NM_209075.1"/>
</dbReference>
<dbReference type="SMR" id="Q75BD8"/>
<dbReference type="FunCoup" id="Q75BD8">
    <property type="interactions" value="983"/>
</dbReference>
<dbReference type="STRING" id="284811.Q75BD8"/>
<dbReference type="EnsemblFungi" id="AAS51546">
    <property type="protein sequence ID" value="AAS51546"/>
    <property type="gene ID" value="AGOS_ADL374W"/>
</dbReference>
<dbReference type="GeneID" id="4619857"/>
<dbReference type="KEGG" id="ago:AGOS_ADL374W"/>
<dbReference type="eggNOG" id="KOG3414">
    <property type="taxonomic scope" value="Eukaryota"/>
</dbReference>
<dbReference type="HOGENOM" id="CLU_117348_0_0_1"/>
<dbReference type="InParanoid" id="Q75BD8"/>
<dbReference type="OMA" id="GMYELYD"/>
<dbReference type="OrthoDB" id="147752at2759"/>
<dbReference type="Proteomes" id="UP000000591">
    <property type="component" value="Chromosome IV"/>
</dbReference>
<dbReference type="GO" id="GO:0005681">
    <property type="term" value="C:spliceosomal complex"/>
    <property type="evidence" value="ECO:0000318"/>
    <property type="project" value="GO_Central"/>
</dbReference>
<dbReference type="GO" id="GO:0046540">
    <property type="term" value="C:U4/U6 x U5 tri-snRNP complex"/>
    <property type="evidence" value="ECO:0000318"/>
    <property type="project" value="GO_Central"/>
</dbReference>
<dbReference type="GO" id="GO:0005682">
    <property type="term" value="C:U5 snRNP"/>
    <property type="evidence" value="ECO:0000318"/>
    <property type="project" value="GO_Central"/>
</dbReference>
<dbReference type="GO" id="GO:0051301">
    <property type="term" value="P:cell division"/>
    <property type="evidence" value="ECO:0007669"/>
    <property type="project" value="UniProtKB-KW"/>
</dbReference>
<dbReference type="GO" id="GO:0000398">
    <property type="term" value="P:mRNA splicing, via spliceosome"/>
    <property type="evidence" value="ECO:0007669"/>
    <property type="project" value="EnsemblFungi"/>
</dbReference>
<dbReference type="CDD" id="cd02954">
    <property type="entry name" value="DIM1"/>
    <property type="match status" value="1"/>
</dbReference>
<dbReference type="FunFam" id="3.40.30.10:FF:000004">
    <property type="entry name" value="Spliceosomal protein DIB1"/>
    <property type="match status" value="1"/>
</dbReference>
<dbReference type="Gene3D" id="3.40.30.10">
    <property type="entry name" value="Glutaredoxin"/>
    <property type="match status" value="1"/>
</dbReference>
<dbReference type="InterPro" id="IPR004123">
    <property type="entry name" value="Dim1"/>
</dbReference>
<dbReference type="InterPro" id="IPR036249">
    <property type="entry name" value="Thioredoxin-like_sf"/>
</dbReference>
<dbReference type="PANTHER" id="PTHR12052:SF5">
    <property type="entry name" value="THIOREDOXIN-LIKE PROTEIN 4A"/>
    <property type="match status" value="1"/>
</dbReference>
<dbReference type="PANTHER" id="PTHR12052">
    <property type="entry name" value="THIOREDOXIN-LIKE PROTEN 4A, 4B"/>
    <property type="match status" value="1"/>
</dbReference>
<dbReference type="Pfam" id="PF02966">
    <property type="entry name" value="DIM1"/>
    <property type="match status" value="1"/>
</dbReference>
<dbReference type="PIRSF" id="PIRSF017199">
    <property type="entry name" value="mRNA_splic_U5"/>
    <property type="match status" value="1"/>
</dbReference>
<dbReference type="SMART" id="SM01410">
    <property type="entry name" value="DIM1"/>
    <property type="match status" value="1"/>
</dbReference>
<dbReference type="SUPFAM" id="SSF52833">
    <property type="entry name" value="Thioredoxin-like"/>
    <property type="match status" value="1"/>
</dbReference>
<comment type="function">
    <text evidence="1">Essential role in pre-mRNA splicing. Also essential for entry into mitosis (G2/M progression) as well as for chromosome segregation during mitosis (By similarity).</text>
</comment>
<comment type="subunit">
    <text evidence="1">Component of the 25S [U4/U6.U5] tri-snRNP.</text>
</comment>
<comment type="subcellular location">
    <subcellularLocation>
        <location evidence="1">Nucleus</location>
    </subcellularLocation>
</comment>
<comment type="similarity">
    <text evidence="2">Belongs to the DIM1 family.</text>
</comment>
<sequence>MGSVFLPHLHSGWHVDQAIVTEEERLVVIRFGSDSDRSCMLMDEILYSIAEKVVNFAAIYVCDTTEVPDFNEMYELQDPMTVMFFYKNKHMRCDFGTGNNNKMNFVVDNKQEMIDIIETVFRGARRNKGLVVSPYDYNYKRIQ</sequence>
<reference key="1">
    <citation type="journal article" date="2004" name="Science">
        <title>The Ashbya gossypii genome as a tool for mapping the ancient Saccharomyces cerevisiae genome.</title>
        <authorList>
            <person name="Dietrich F.S."/>
            <person name="Voegeli S."/>
            <person name="Brachat S."/>
            <person name="Lerch A."/>
            <person name="Gates K."/>
            <person name="Steiner S."/>
            <person name="Mohr C."/>
            <person name="Poehlmann R."/>
            <person name="Luedi P."/>
            <person name="Choi S."/>
            <person name="Wing R.A."/>
            <person name="Flavier A."/>
            <person name="Gaffney T.D."/>
            <person name="Philippsen P."/>
        </authorList>
    </citation>
    <scope>NUCLEOTIDE SEQUENCE [LARGE SCALE GENOMIC DNA]</scope>
    <source>
        <strain>ATCC 10895 / CBS 109.51 / FGSC 9923 / NRRL Y-1056</strain>
    </source>
</reference>
<reference key="2">
    <citation type="journal article" date="2013" name="G3 (Bethesda)">
        <title>Genomes of Ashbya fungi isolated from insects reveal four mating-type loci, numerous translocations, lack of transposons, and distinct gene duplications.</title>
        <authorList>
            <person name="Dietrich F.S."/>
            <person name="Voegeli S."/>
            <person name="Kuo S."/>
            <person name="Philippsen P."/>
        </authorList>
    </citation>
    <scope>GENOME REANNOTATION</scope>
    <source>
        <strain>ATCC 10895 / CBS 109.51 / FGSC 9923 / NRRL Y-1056</strain>
    </source>
</reference>
<organism>
    <name type="scientific">Eremothecium gossypii (strain ATCC 10895 / CBS 109.51 / FGSC 9923 / NRRL Y-1056)</name>
    <name type="common">Yeast</name>
    <name type="synonym">Ashbya gossypii</name>
    <dbReference type="NCBI Taxonomy" id="284811"/>
    <lineage>
        <taxon>Eukaryota</taxon>
        <taxon>Fungi</taxon>
        <taxon>Dikarya</taxon>
        <taxon>Ascomycota</taxon>
        <taxon>Saccharomycotina</taxon>
        <taxon>Saccharomycetes</taxon>
        <taxon>Saccharomycetales</taxon>
        <taxon>Saccharomycetaceae</taxon>
        <taxon>Eremothecium</taxon>
    </lineage>
</organism>
<proteinExistence type="inferred from homology"/>
<evidence type="ECO:0000250" key="1"/>
<evidence type="ECO:0000305" key="2"/>
<name>DIB1_EREGS</name>
<feature type="chain" id="PRO_0000218283" description="Spliceosomal protein DIB1">
    <location>
        <begin position="1"/>
        <end position="143"/>
    </location>
</feature>
<protein>
    <recommendedName>
        <fullName>Spliceosomal protein DIB1</fullName>
    </recommendedName>
</protein>